<proteinExistence type="inferred from homology"/>
<protein>
    <recommendedName>
        <fullName evidence="1">Peptide chain release factor 2</fullName>
        <shortName evidence="1">RF-2</shortName>
    </recommendedName>
</protein>
<evidence type="ECO:0000255" key="1">
    <source>
        <dbReference type="HAMAP-Rule" id="MF_00094"/>
    </source>
</evidence>
<name>RF2_SALPK</name>
<organism>
    <name type="scientific">Salmonella paratyphi A (strain AKU_12601)</name>
    <dbReference type="NCBI Taxonomy" id="554290"/>
    <lineage>
        <taxon>Bacteria</taxon>
        <taxon>Pseudomonadati</taxon>
        <taxon>Pseudomonadota</taxon>
        <taxon>Gammaproteobacteria</taxon>
        <taxon>Enterobacterales</taxon>
        <taxon>Enterobacteriaceae</taxon>
        <taxon>Salmonella</taxon>
    </lineage>
</organism>
<keyword id="KW-0963">Cytoplasm</keyword>
<keyword id="KW-0488">Methylation</keyword>
<keyword id="KW-0648">Protein biosynthesis</keyword>
<sequence length="365" mass="41149">MFEINPVNNRIQDLTERTNVLRGYLDYDAKKERLEEVNAELEQPDVWNEPERAQALGKERSSLEAIVDTLDQMTQGLDDVSGLLELAVEADDEETFNEAVAELNTLEEKLAQLEFRRMFSGEYDSADCYLDIQAGSGGTEAQDWASMLLRMYLRWAEARGFKTEVIEESEGEVAGIKSATIKISGEYAYGWLRTETGVHRLVRKSPFDSGGRRHTSFSSAFVYPEVDDDIDIDINPADLRIDVYRASGAGGQHVNRTESAVRITHIPTGIVTQCQNDRSQHKNKDQAMKQMKAKLYELEMQKKNAEKQAMEDTKSDIGWGSQIRSYVLDDSRIKDLRTGVETRNTQAVLDGSLDQFIEASLKAGL</sequence>
<comment type="function">
    <text evidence="1">Peptide chain release factor 2 directs the termination of translation in response to the peptide chain termination codons UGA and UAA.</text>
</comment>
<comment type="subcellular location">
    <subcellularLocation>
        <location evidence="1">Cytoplasm</location>
    </subcellularLocation>
</comment>
<comment type="PTM">
    <text evidence="1">Methylated by PrmC. Methylation increases the termination efficiency of RF2.</text>
</comment>
<comment type="similarity">
    <text evidence="1">Belongs to the prokaryotic/mitochondrial release factor family.</text>
</comment>
<accession>B5BFK6</accession>
<feature type="chain" id="PRO_1000093554" description="Peptide chain release factor 2">
    <location>
        <begin position="1"/>
        <end position="365"/>
    </location>
</feature>
<feature type="modified residue" description="N5-methylglutamine" evidence="1">
    <location>
        <position position="252"/>
    </location>
</feature>
<reference key="1">
    <citation type="journal article" date="2009" name="BMC Genomics">
        <title>Pseudogene accumulation in the evolutionary histories of Salmonella enterica serovars Paratyphi A and Typhi.</title>
        <authorList>
            <person name="Holt K.E."/>
            <person name="Thomson N.R."/>
            <person name="Wain J."/>
            <person name="Langridge G.C."/>
            <person name="Hasan R."/>
            <person name="Bhutta Z.A."/>
            <person name="Quail M.A."/>
            <person name="Norbertczak H."/>
            <person name="Walker D."/>
            <person name="Simmonds M."/>
            <person name="White B."/>
            <person name="Bason N."/>
            <person name="Mungall K."/>
            <person name="Dougan G."/>
            <person name="Parkhill J."/>
        </authorList>
    </citation>
    <scope>NUCLEOTIDE SEQUENCE [LARGE SCALE GENOMIC DNA]</scope>
    <source>
        <strain>AKU_12601</strain>
    </source>
</reference>
<dbReference type="EMBL" id="FM200053">
    <property type="protein sequence ID" value="CAR60952.1"/>
    <property type="molecule type" value="Genomic_DNA"/>
</dbReference>
<dbReference type="SMR" id="B5BFK6"/>
<dbReference type="KEGG" id="sek:SSPA2710"/>
<dbReference type="HOGENOM" id="CLU_220733_1_0_6"/>
<dbReference type="Proteomes" id="UP000001869">
    <property type="component" value="Chromosome"/>
</dbReference>
<dbReference type="GO" id="GO:0005737">
    <property type="term" value="C:cytoplasm"/>
    <property type="evidence" value="ECO:0007669"/>
    <property type="project" value="UniProtKB-SubCell"/>
</dbReference>
<dbReference type="GO" id="GO:0016149">
    <property type="term" value="F:translation release factor activity, codon specific"/>
    <property type="evidence" value="ECO:0007669"/>
    <property type="project" value="UniProtKB-UniRule"/>
</dbReference>
<dbReference type="FunFam" id="1.20.58.410:FF:000001">
    <property type="entry name" value="Peptide chain release factor 2"/>
    <property type="match status" value="1"/>
</dbReference>
<dbReference type="FunFam" id="3.30.160.20:FF:000010">
    <property type="entry name" value="Peptide chain release factor 2"/>
    <property type="match status" value="1"/>
</dbReference>
<dbReference type="Gene3D" id="3.30.160.20">
    <property type="match status" value="1"/>
</dbReference>
<dbReference type="Gene3D" id="3.30.70.1660">
    <property type="match status" value="1"/>
</dbReference>
<dbReference type="Gene3D" id="1.20.58.410">
    <property type="entry name" value="Release factor"/>
    <property type="match status" value="1"/>
</dbReference>
<dbReference type="HAMAP" id="MF_00094">
    <property type="entry name" value="Rel_fac_2"/>
    <property type="match status" value="1"/>
</dbReference>
<dbReference type="InterPro" id="IPR005139">
    <property type="entry name" value="PCRF"/>
</dbReference>
<dbReference type="InterPro" id="IPR000352">
    <property type="entry name" value="Pep_chain_release_fac_I"/>
</dbReference>
<dbReference type="InterPro" id="IPR045853">
    <property type="entry name" value="Pep_chain_release_fac_I_sf"/>
</dbReference>
<dbReference type="InterPro" id="IPR004374">
    <property type="entry name" value="PrfB"/>
</dbReference>
<dbReference type="NCBIfam" id="TIGR00020">
    <property type="entry name" value="prfB"/>
    <property type="match status" value="1"/>
</dbReference>
<dbReference type="PANTHER" id="PTHR43116:SF3">
    <property type="entry name" value="CLASS I PEPTIDE CHAIN RELEASE FACTOR"/>
    <property type="match status" value="1"/>
</dbReference>
<dbReference type="PANTHER" id="PTHR43116">
    <property type="entry name" value="PEPTIDE CHAIN RELEASE FACTOR 2"/>
    <property type="match status" value="1"/>
</dbReference>
<dbReference type="Pfam" id="PF03462">
    <property type="entry name" value="PCRF"/>
    <property type="match status" value="1"/>
</dbReference>
<dbReference type="Pfam" id="PF00472">
    <property type="entry name" value="RF-1"/>
    <property type="match status" value="1"/>
</dbReference>
<dbReference type="SMART" id="SM00937">
    <property type="entry name" value="PCRF"/>
    <property type="match status" value="1"/>
</dbReference>
<dbReference type="SUPFAM" id="SSF75620">
    <property type="entry name" value="Release factor"/>
    <property type="match status" value="1"/>
</dbReference>
<dbReference type="PROSITE" id="PS00745">
    <property type="entry name" value="RF_PROK_I"/>
    <property type="match status" value="1"/>
</dbReference>
<gene>
    <name evidence="1" type="primary">prfB</name>
    <name type="ordered locus">SSPA2710</name>
</gene>